<sequence>MNKILKGDEVIVLTGRDKGKRGKIAVRVDEDHVLVDGVNVVKKHVRPNPLKGTTGGIVDKTMPIHQSNVAIYNPASGKADRVGIKLLADGKKVRVFKSSGEEIKA</sequence>
<name>RL24_LEPCP</name>
<accession>B1Y8C6</accession>
<reference key="1">
    <citation type="submission" date="2008-03" db="EMBL/GenBank/DDBJ databases">
        <title>Complete sequence of Leptothrix cholodnii SP-6.</title>
        <authorList>
            <consortium name="US DOE Joint Genome Institute"/>
            <person name="Copeland A."/>
            <person name="Lucas S."/>
            <person name="Lapidus A."/>
            <person name="Glavina del Rio T."/>
            <person name="Dalin E."/>
            <person name="Tice H."/>
            <person name="Bruce D."/>
            <person name="Goodwin L."/>
            <person name="Pitluck S."/>
            <person name="Chertkov O."/>
            <person name="Brettin T."/>
            <person name="Detter J.C."/>
            <person name="Han C."/>
            <person name="Kuske C.R."/>
            <person name="Schmutz J."/>
            <person name="Larimer F."/>
            <person name="Land M."/>
            <person name="Hauser L."/>
            <person name="Kyrpides N."/>
            <person name="Lykidis A."/>
            <person name="Emerson D."/>
            <person name="Richardson P."/>
        </authorList>
    </citation>
    <scope>NUCLEOTIDE SEQUENCE [LARGE SCALE GENOMIC DNA]</scope>
    <source>
        <strain>ATCC 51168 / LMG 8142 / SP-6</strain>
    </source>
</reference>
<protein>
    <recommendedName>
        <fullName evidence="1">Large ribosomal subunit protein uL24</fullName>
    </recommendedName>
    <alternativeName>
        <fullName evidence="2">50S ribosomal protein L24</fullName>
    </alternativeName>
</protein>
<gene>
    <name evidence="1" type="primary">rplX</name>
    <name type="ordered locus">Lcho_3938</name>
</gene>
<feature type="chain" id="PRO_1000142010" description="Large ribosomal subunit protein uL24">
    <location>
        <begin position="1"/>
        <end position="105"/>
    </location>
</feature>
<evidence type="ECO:0000255" key="1">
    <source>
        <dbReference type="HAMAP-Rule" id="MF_01326"/>
    </source>
</evidence>
<evidence type="ECO:0000305" key="2"/>
<proteinExistence type="inferred from homology"/>
<comment type="function">
    <text evidence="1">One of two assembly initiator proteins, it binds directly to the 5'-end of the 23S rRNA, where it nucleates assembly of the 50S subunit.</text>
</comment>
<comment type="function">
    <text evidence="1">One of the proteins that surrounds the polypeptide exit tunnel on the outside of the subunit.</text>
</comment>
<comment type="subunit">
    <text evidence="1">Part of the 50S ribosomal subunit.</text>
</comment>
<comment type="similarity">
    <text evidence="1">Belongs to the universal ribosomal protein uL24 family.</text>
</comment>
<organism>
    <name type="scientific">Leptothrix cholodnii (strain ATCC 51168 / LMG 8142 / SP-6)</name>
    <name type="common">Leptothrix discophora (strain SP-6)</name>
    <dbReference type="NCBI Taxonomy" id="395495"/>
    <lineage>
        <taxon>Bacteria</taxon>
        <taxon>Pseudomonadati</taxon>
        <taxon>Pseudomonadota</taxon>
        <taxon>Betaproteobacteria</taxon>
        <taxon>Burkholderiales</taxon>
        <taxon>Sphaerotilaceae</taxon>
        <taxon>Leptothrix</taxon>
    </lineage>
</organism>
<keyword id="KW-1185">Reference proteome</keyword>
<keyword id="KW-0687">Ribonucleoprotein</keyword>
<keyword id="KW-0689">Ribosomal protein</keyword>
<keyword id="KW-0694">RNA-binding</keyword>
<keyword id="KW-0699">rRNA-binding</keyword>
<dbReference type="EMBL" id="CP001013">
    <property type="protein sequence ID" value="ACB36192.1"/>
    <property type="molecule type" value="Genomic_DNA"/>
</dbReference>
<dbReference type="RefSeq" id="WP_012348937.1">
    <property type="nucleotide sequence ID" value="NC_010524.1"/>
</dbReference>
<dbReference type="SMR" id="B1Y8C6"/>
<dbReference type="STRING" id="395495.Lcho_3938"/>
<dbReference type="KEGG" id="lch:Lcho_3938"/>
<dbReference type="eggNOG" id="COG0198">
    <property type="taxonomic scope" value="Bacteria"/>
</dbReference>
<dbReference type="HOGENOM" id="CLU_093315_2_2_4"/>
<dbReference type="OrthoDB" id="9807419at2"/>
<dbReference type="Proteomes" id="UP000001693">
    <property type="component" value="Chromosome"/>
</dbReference>
<dbReference type="GO" id="GO:1990904">
    <property type="term" value="C:ribonucleoprotein complex"/>
    <property type="evidence" value="ECO:0007669"/>
    <property type="project" value="UniProtKB-KW"/>
</dbReference>
<dbReference type="GO" id="GO:0005840">
    <property type="term" value="C:ribosome"/>
    <property type="evidence" value="ECO:0007669"/>
    <property type="project" value="UniProtKB-KW"/>
</dbReference>
<dbReference type="GO" id="GO:0019843">
    <property type="term" value="F:rRNA binding"/>
    <property type="evidence" value="ECO:0007669"/>
    <property type="project" value="UniProtKB-UniRule"/>
</dbReference>
<dbReference type="GO" id="GO:0003735">
    <property type="term" value="F:structural constituent of ribosome"/>
    <property type="evidence" value="ECO:0007669"/>
    <property type="project" value="InterPro"/>
</dbReference>
<dbReference type="GO" id="GO:0006412">
    <property type="term" value="P:translation"/>
    <property type="evidence" value="ECO:0007669"/>
    <property type="project" value="UniProtKB-UniRule"/>
</dbReference>
<dbReference type="CDD" id="cd06089">
    <property type="entry name" value="KOW_RPL26"/>
    <property type="match status" value="1"/>
</dbReference>
<dbReference type="FunFam" id="2.30.30.30:FF:000004">
    <property type="entry name" value="50S ribosomal protein L24"/>
    <property type="match status" value="1"/>
</dbReference>
<dbReference type="Gene3D" id="2.30.30.30">
    <property type="match status" value="1"/>
</dbReference>
<dbReference type="HAMAP" id="MF_01326_B">
    <property type="entry name" value="Ribosomal_uL24_B"/>
    <property type="match status" value="1"/>
</dbReference>
<dbReference type="InterPro" id="IPR014722">
    <property type="entry name" value="Rib_uL2_dom2"/>
</dbReference>
<dbReference type="InterPro" id="IPR003256">
    <property type="entry name" value="Ribosomal_uL24"/>
</dbReference>
<dbReference type="InterPro" id="IPR005825">
    <property type="entry name" value="Ribosomal_uL24_CS"/>
</dbReference>
<dbReference type="InterPro" id="IPR041988">
    <property type="entry name" value="Ribosomal_uL24_KOW"/>
</dbReference>
<dbReference type="InterPro" id="IPR008991">
    <property type="entry name" value="Translation_prot_SH3-like_sf"/>
</dbReference>
<dbReference type="NCBIfam" id="TIGR01079">
    <property type="entry name" value="rplX_bact"/>
    <property type="match status" value="1"/>
</dbReference>
<dbReference type="PANTHER" id="PTHR12903">
    <property type="entry name" value="MITOCHONDRIAL RIBOSOMAL PROTEIN L24"/>
    <property type="match status" value="1"/>
</dbReference>
<dbReference type="Pfam" id="PF17136">
    <property type="entry name" value="ribosomal_L24"/>
    <property type="match status" value="1"/>
</dbReference>
<dbReference type="SUPFAM" id="SSF50104">
    <property type="entry name" value="Translation proteins SH3-like domain"/>
    <property type="match status" value="1"/>
</dbReference>
<dbReference type="PROSITE" id="PS01108">
    <property type="entry name" value="RIBOSOMAL_L24"/>
    <property type="match status" value="1"/>
</dbReference>